<organism>
    <name type="scientific">Pseudomonas fluorescens</name>
    <dbReference type="NCBI Taxonomy" id="294"/>
    <lineage>
        <taxon>Bacteria</taxon>
        <taxon>Pseudomonadati</taxon>
        <taxon>Pseudomonadota</taxon>
        <taxon>Gammaproteobacteria</taxon>
        <taxon>Pseudomonadales</taxon>
        <taxon>Pseudomonadaceae</taxon>
        <taxon>Pseudomonas</taxon>
    </lineage>
</organism>
<feature type="initiator methionine" description="Removed" evidence="4">
    <location>
        <position position="1"/>
    </location>
</feature>
<feature type="chain" id="PRO_0000418727" description="Hydroxycinnamoyl-CoA hydratase-lyase">
    <location>
        <begin position="2"/>
        <end position="276"/>
    </location>
</feature>
<feature type="binding site" evidence="3 8 9">
    <location>
        <position position="29"/>
    </location>
    <ligand>
        <name>acetyl-CoA</name>
        <dbReference type="ChEBI" id="CHEBI:57288"/>
    </ligand>
</feature>
<feature type="binding site" evidence="3 8 9">
    <location>
        <position position="68"/>
    </location>
    <ligand>
        <name>acetyl-CoA</name>
        <dbReference type="ChEBI" id="CHEBI:57288"/>
    </ligand>
</feature>
<feature type="binding site" evidence="3 8 9">
    <location>
        <position position="70"/>
    </location>
    <ligand>
        <name>acetyl-CoA</name>
        <dbReference type="ChEBI" id="CHEBI:57288"/>
    </ligand>
</feature>
<feature type="binding site" evidence="3 8 9">
    <location>
        <position position="72"/>
    </location>
    <ligand>
        <name>acetyl-CoA</name>
        <dbReference type="ChEBI" id="CHEBI:57288"/>
    </ligand>
</feature>
<feature type="binding site" evidence="3 8 9">
    <location>
        <position position="75"/>
    </location>
    <ligand>
        <name>vanillin</name>
        <dbReference type="ChEBI" id="CHEBI:18346"/>
    </ligand>
</feature>
<feature type="binding site" evidence="3 8 9">
    <location>
        <position position="120"/>
    </location>
    <ligand>
        <name>acetyl-CoA</name>
        <dbReference type="ChEBI" id="CHEBI:57288"/>
    </ligand>
</feature>
<feature type="binding site" evidence="3 8 9">
    <location>
        <position position="142"/>
    </location>
    <ligand>
        <name>acetyl-CoA</name>
        <dbReference type="ChEBI" id="CHEBI:57288"/>
    </ligand>
</feature>
<feature type="binding site" evidence="3 8">
    <location>
        <position position="146"/>
    </location>
    <ligand>
        <name>acetyl-CoA</name>
        <dbReference type="ChEBI" id="CHEBI:57288"/>
    </ligand>
</feature>
<feature type="binding site" evidence="3 8 9">
    <location>
        <position position="151"/>
    </location>
    <ligand>
        <name>vanillin</name>
        <dbReference type="ChEBI" id="CHEBI:18346"/>
    </ligand>
</feature>
<feature type="binding site" evidence="3 8 9">
    <location>
        <position position="239"/>
    </location>
    <ligand>
        <name>vanillin</name>
        <dbReference type="ChEBI" id="CHEBI:18346"/>
    </ligand>
</feature>
<feature type="mutagenesis site" description="Reduced kcat compared to wild-type but not markerdly." evidence="3">
    <original>S</original>
    <variation>A</variation>
    <location>
        <position position="123"/>
    </location>
</feature>
<feature type="mutagenesis site" description="Abolishes catalytic activity." evidence="3">
    <original>E</original>
    <variation>A</variation>
    <location>
        <position position="143"/>
    </location>
</feature>
<feature type="mutagenesis site" description="Increased KM for feruloyl-CoA but retains a significant amount of catalytic activity with a kcat 10 times less than that of the wild-type." evidence="3">
    <original>Y</original>
    <variation>F</variation>
    <location>
        <position position="239"/>
    </location>
</feature>
<feature type="sequence conflict" description="In Ref. 1; AA sequence." evidence="6" ref="1">
    <original>E</original>
    <variation>Q</variation>
    <location>
        <position position="16"/>
    </location>
</feature>
<feature type="strand" evidence="10">
    <location>
        <begin position="9"/>
        <end position="16"/>
    </location>
</feature>
<feature type="strand" evidence="10">
    <location>
        <begin position="18"/>
        <end position="24"/>
    </location>
</feature>
<feature type="helix" evidence="10">
    <location>
        <begin position="27"/>
        <end position="29"/>
    </location>
</feature>
<feature type="helix" evidence="10">
    <location>
        <begin position="35"/>
        <end position="49"/>
    </location>
</feature>
<feature type="strand" evidence="10">
    <location>
        <begin position="54"/>
        <end position="62"/>
    </location>
</feature>
<feature type="strand" evidence="10">
    <location>
        <begin position="65"/>
        <end position="67"/>
    </location>
</feature>
<feature type="helix" evidence="10">
    <location>
        <begin position="72"/>
        <end position="81"/>
    </location>
</feature>
<feature type="helix" evidence="10">
    <location>
        <begin position="86"/>
        <end position="98"/>
    </location>
</feature>
<feature type="turn" evidence="10">
    <location>
        <begin position="99"/>
        <end position="104"/>
    </location>
</feature>
<feature type="strand" evidence="10">
    <location>
        <begin position="109"/>
        <end position="113"/>
    </location>
</feature>
<feature type="strand" evidence="10">
    <location>
        <begin position="115"/>
        <end position="118"/>
    </location>
</feature>
<feature type="helix" evidence="10">
    <location>
        <begin position="119"/>
        <end position="121"/>
    </location>
</feature>
<feature type="helix" evidence="10">
    <location>
        <begin position="122"/>
        <end position="127"/>
    </location>
</feature>
<feature type="strand" evidence="10">
    <location>
        <begin position="128"/>
        <end position="134"/>
    </location>
</feature>
<feature type="strand" evidence="10">
    <location>
        <begin position="138"/>
        <end position="140"/>
    </location>
</feature>
<feature type="helix" evidence="10">
    <location>
        <begin position="142"/>
        <end position="146"/>
    </location>
</feature>
<feature type="helix" evidence="10">
    <location>
        <begin position="154"/>
        <end position="161"/>
    </location>
</feature>
<feature type="helix" evidence="10">
    <location>
        <begin position="164"/>
        <end position="173"/>
    </location>
</feature>
<feature type="strand" evidence="10">
    <location>
        <begin position="176"/>
        <end position="178"/>
    </location>
</feature>
<feature type="helix" evidence="10">
    <location>
        <begin position="179"/>
        <end position="184"/>
    </location>
</feature>
<feature type="strand" evidence="10">
    <location>
        <begin position="187"/>
        <end position="192"/>
    </location>
</feature>
<feature type="helix" evidence="10">
    <location>
        <begin position="194"/>
        <end position="209"/>
    </location>
</feature>
<feature type="helix" evidence="10">
    <location>
        <begin position="213"/>
        <end position="226"/>
    </location>
</feature>
<feature type="helix" evidence="10">
    <location>
        <begin position="231"/>
        <end position="248"/>
    </location>
</feature>
<name>HCHL_PSEFL</name>
<evidence type="ECO:0000269" key="1">
    <source>
    </source>
</evidence>
<evidence type="ECO:0000269" key="2">
    <source>
    </source>
</evidence>
<evidence type="ECO:0000269" key="3">
    <source>
    </source>
</evidence>
<evidence type="ECO:0000269" key="4">
    <source>
    </source>
</evidence>
<evidence type="ECO:0000303" key="5">
    <source>
    </source>
</evidence>
<evidence type="ECO:0000305" key="6"/>
<evidence type="ECO:0007744" key="7">
    <source>
        <dbReference type="PDB" id="2J5I"/>
    </source>
</evidence>
<evidence type="ECO:0007744" key="8">
    <source>
        <dbReference type="PDB" id="2VSS"/>
    </source>
</evidence>
<evidence type="ECO:0007744" key="9">
    <source>
        <dbReference type="PDB" id="2VSU"/>
    </source>
</evidence>
<evidence type="ECO:0007829" key="10">
    <source>
        <dbReference type="PDB" id="2J5I"/>
    </source>
</evidence>
<dbReference type="EC" id="4.1.2.61" evidence="1 4"/>
<dbReference type="EMBL" id="Y13067">
    <property type="protein sequence ID" value="CAA73502.1"/>
    <property type="molecule type" value="Genomic_DNA"/>
</dbReference>
<dbReference type="RefSeq" id="WP_027620477.1">
    <property type="nucleotide sequence ID" value="NZ_CP142426.1"/>
</dbReference>
<dbReference type="PDB" id="2J5I">
    <property type="method" value="X-ray"/>
    <property type="resolution" value="1.80 A"/>
    <property type="chains" value="A/B/C/D/E/F/G/H/I/J/K/L=1-276"/>
</dbReference>
<dbReference type="PDB" id="2VSS">
    <property type="method" value="X-ray"/>
    <property type="resolution" value="2.22 A"/>
    <property type="chains" value="A/B/C/D/E/F=1-276"/>
</dbReference>
<dbReference type="PDB" id="2VSU">
    <property type="method" value="X-ray"/>
    <property type="resolution" value="1.90 A"/>
    <property type="chains" value="A/B/C/D/E/F=1-276"/>
</dbReference>
<dbReference type="PDBsum" id="2J5I"/>
<dbReference type="PDBsum" id="2VSS"/>
<dbReference type="PDBsum" id="2VSU"/>
<dbReference type="SMR" id="O69762"/>
<dbReference type="eggNOG" id="COG1024">
    <property type="taxonomic scope" value="Bacteria"/>
</dbReference>
<dbReference type="BRENDA" id="4.1.2.61">
    <property type="organism ID" value="5121"/>
</dbReference>
<dbReference type="EvolutionaryTrace" id="O69762"/>
<dbReference type="GO" id="GO:0050547">
    <property type="term" value="F:feruloyl-CoA hydratase/lyase activity"/>
    <property type="evidence" value="ECO:0007669"/>
    <property type="project" value="UniProtKB-EC"/>
</dbReference>
<dbReference type="GO" id="GO:0008300">
    <property type="term" value="P:isoprenoid catabolic process"/>
    <property type="evidence" value="ECO:0007669"/>
    <property type="project" value="TreeGrafter"/>
</dbReference>
<dbReference type="CDD" id="cd06558">
    <property type="entry name" value="crotonase-like"/>
    <property type="match status" value="1"/>
</dbReference>
<dbReference type="FunFam" id="3.90.226.10:FF:000036">
    <property type="entry name" value="p-hydroxycinnamoyl CoA hydratase/lyase"/>
    <property type="match status" value="1"/>
</dbReference>
<dbReference type="Gene3D" id="6.10.250.2850">
    <property type="match status" value="1"/>
</dbReference>
<dbReference type="Gene3D" id="3.90.226.10">
    <property type="entry name" value="2-enoyl-CoA Hydratase, Chain A, domain 1"/>
    <property type="match status" value="1"/>
</dbReference>
<dbReference type="InterPro" id="IPR029045">
    <property type="entry name" value="ClpP/crotonase-like_dom_sf"/>
</dbReference>
<dbReference type="InterPro" id="IPR018376">
    <property type="entry name" value="Enoyl-CoA_hyd/isom_CS"/>
</dbReference>
<dbReference type="InterPro" id="IPR001753">
    <property type="entry name" value="Enoyl-CoA_hydra/iso"/>
</dbReference>
<dbReference type="InterPro" id="IPR051683">
    <property type="entry name" value="Enoyl-CoA_Hydratase/Isomerase"/>
</dbReference>
<dbReference type="NCBIfam" id="NF006588">
    <property type="entry name" value="PRK09120.1"/>
    <property type="match status" value="1"/>
</dbReference>
<dbReference type="PANTHER" id="PTHR42964">
    <property type="entry name" value="ENOYL-COA HYDRATASE"/>
    <property type="match status" value="1"/>
</dbReference>
<dbReference type="PANTHER" id="PTHR42964:SF1">
    <property type="entry name" value="POLYKETIDE BIOSYNTHESIS ENOYL-COA HYDRATASE PKSH-RELATED"/>
    <property type="match status" value="1"/>
</dbReference>
<dbReference type="Pfam" id="PF00378">
    <property type="entry name" value="ECH_1"/>
    <property type="match status" value="1"/>
</dbReference>
<dbReference type="SUPFAM" id="SSF52096">
    <property type="entry name" value="ClpP/crotonase"/>
    <property type="match status" value="1"/>
</dbReference>
<dbReference type="PROSITE" id="PS00166">
    <property type="entry name" value="ENOYL_COA_HYDRATASE"/>
    <property type="match status" value="1"/>
</dbReference>
<proteinExistence type="evidence at protein level"/>
<protein>
    <recommendedName>
        <fullName evidence="5">Hydroxycinnamoyl-CoA hydratase-lyase</fullName>
        <shortName evidence="5">HCHL</shortName>
        <ecNumber evidence="1 4">4.1.2.61</ecNumber>
    </recommendedName>
    <alternativeName>
        <fullName>P-hydroxycinnamoyl CoA hydratase/lyase</fullName>
    </alternativeName>
    <alternativeName>
        <fullName>Trans-feruloyl-CoA hydratase/vanillin synthase</fullName>
    </alternativeName>
</protein>
<reference key="1">
    <citation type="journal article" date="1998" name="J. Biol. Chem.">
        <title>Metabolism of ferulic acid to vanillin. A bacterial gene of the enoyl-SCoA hydratase/isomerase superfamily encodes an enzyme for the hydration and cleavage of a hydroxycinnamic acid SCoA thioester.</title>
        <authorList>
            <person name="Gasson M.J."/>
            <person name="Kitamura Y."/>
            <person name="McLauchlan W.R."/>
            <person name="Narbad A."/>
            <person name="Parr A.J."/>
            <person name="Parsons E.L."/>
            <person name="Payne J."/>
            <person name="Rhodes M.J."/>
            <person name="Walton N.J."/>
        </authorList>
    </citation>
    <scope>NUCLEOTIDE SEQUENCE [GENOMIC DNA]</scope>
    <scope>PROTEIN SEQUENCE OF 2-21</scope>
    <scope>FUNCTION</scope>
    <scope>CATALYTIC ACTIVITY</scope>
    <source>
        <strain>AN103</strain>
    </source>
</reference>
<reference key="2">
    <citation type="journal article" date="1999" name="Arch. Biochem. Biophys.">
        <title>4-hydroxycinnamoyl-CoA hydratase/lyase (HCHL)--An enzyme of phenylpropanoid chain cleavage from Pseudomonas.</title>
        <authorList>
            <person name="Mitra A."/>
            <person name="Kitamura Y."/>
            <person name="Gasson M.J."/>
            <person name="Narbad A."/>
            <person name="Parr A.J."/>
            <person name="Payne J."/>
            <person name="Rhodes M.J."/>
            <person name="Sewter C."/>
            <person name="Walton N.J."/>
        </authorList>
    </citation>
    <scope>FUNCTION</scope>
    <scope>CATALYTIC ACTIVITY</scope>
    <scope>BIOPHYSICOCHEMICAL PROPERTIES</scope>
    <source>
        <strain>AN103</strain>
    </source>
</reference>
<reference evidence="7" key="3">
    <citation type="journal article" date="2006" name="Acta Crystallogr. D">
        <title>The 1.8 A resolution structure of hydroxycinnamoyl-coenzyme A hydratase-lyase (HCHL) from Pseudomonas fluorescens, an enzyme that catalyses the transformation of feruloyl-coenzyme A to vanillin.</title>
        <authorList>
            <person name="Leonard P.M."/>
            <person name="Brzozowski A.M."/>
            <person name="Lebedev A."/>
            <person name="Marshall C.M."/>
            <person name="Smith D.J."/>
            <person name="Verma C.S."/>
            <person name="Walton N.J."/>
            <person name="Grogan G."/>
        </authorList>
    </citation>
    <scope>X-RAY CRYSTALLOGRAPHY (1.80 ANGSTROMS)</scope>
    <scope>SUBUNIT</scope>
    <source>
        <strain>AN103</strain>
    </source>
</reference>
<reference evidence="8 9" key="4">
    <citation type="journal article" date="2008" name="Biochem. J.">
        <title>A ternary complex of hydroxycinnamoyl-CoA hydratase-lyase (HCHL) with acetyl-CoA and vanillin gives insights into substrate specificity and mechanism.</title>
        <authorList>
            <person name="Bennett J.P."/>
            <person name="Bertin L."/>
            <person name="Moulton B."/>
            <person name="Fairlamb I.J."/>
            <person name="Brzozowski A.M."/>
            <person name="Walton N.J."/>
            <person name="Grogan G."/>
        </authorList>
    </citation>
    <scope>X-RAY CRYSTALLOGRAPHY (1.90 ANGSTROMS) OF WILD-TYPE AND MUTANT ALA-123 IN COMPLEXES WITH VANILLIN AND ACETYL-COA</scope>
    <scope>BIOPHYSICOCHEMICAL PROPERTIES</scope>
    <scope>SUBUNIT</scope>
    <scope>MUTAGENESIS OF SER-123; GLU-143 AND TYR-239</scope>
    <source>
        <strain>AN103</strain>
    </source>
</reference>
<comment type="function">
    <text evidence="1 4">Catalyzes the hydration of the acyl-CoA thioester of ferulic acid and the subsequent retro-aldol cleavage of the hydrated intermediate to yield vanillin (4-hydroxy-3-methoxy-benzaldehyde) (PubMed:10222033, PubMed:9461612). The enzyme is also active with caffeoyl-CoA and 4-coumaroyl-CoA producing 3,4-dihydroxybenzaldehyde and 4-hydroxybenzaldehyde, respectively (PubMed:10222033).</text>
</comment>
<comment type="catalytic activity">
    <reaction evidence="1 4">
        <text>(E)-feruloyl-CoA + H2O = vanillin + acetyl-CoA</text>
        <dbReference type="Rhea" id="RHEA:62412"/>
        <dbReference type="ChEBI" id="CHEBI:15377"/>
        <dbReference type="ChEBI" id="CHEBI:18346"/>
        <dbReference type="ChEBI" id="CHEBI:57288"/>
        <dbReference type="ChEBI" id="CHEBI:87305"/>
        <dbReference type="EC" id="4.1.2.61"/>
    </reaction>
    <physiologicalReaction direction="left-to-right" evidence="4">
        <dbReference type="Rhea" id="RHEA:62413"/>
    </physiologicalReaction>
</comment>
<comment type="catalytic activity">
    <reaction evidence="1">
        <text>(E)-caffeoyl-CoA + H2O = 3,4-dihydroxybenzaldehyde + acetyl-CoA</text>
        <dbReference type="Rhea" id="RHEA:36307"/>
        <dbReference type="ChEBI" id="CHEBI:15377"/>
        <dbReference type="ChEBI" id="CHEBI:50205"/>
        <dbReference type="ChEBI" id="CHEBI:57288"/>
        <dbReference type="ChEBI" id="CHEBI:87136"/>
        <dbReference type="EC" id="4.1.2.61"/>
    </reaction>
</comment>
<comment type="catalytic activity">
    <reaction evidence="1">
        <text>(E)-4-coumaroyl-CoA + H2O = 4-hydroxybenzaldehyde + acetyl-CoA</text>
        <dbReference type="Rhea" id="RHEA:62416"/>
        <dbReference type="ChEBI" id="CHEBI:15377"/>
        <dbReference type="ChEBI" id="CHEBI:17597"/>
        <dbReference type="ChEBI" id="CHEBI:57288"/>
        <dbReference type="ChEBI" id="CHEBI:85008"/>
        <dbReference type="EC" id="4.1.2.61"/>
    </reaction>
</comment>
<comment type="catalytic activity">
    <reaction evidence="1 4">
        <text>(E)-feruloyl-CoA + H2O = 3-hydroxy-3-(4-hydroxy-3-methoxyphenyl)propanoyl-CoA</text>
        <dbReference type="Rhea" id="RHEA:14517"/>
        <dbReference type="ChEBI" id="CHEBI:15377"/>
        <dbReference type="ChEBI" id="CHEBI:58004"/>
        <dbReference type="ChEBI" id="CHEBI:87305"/>
        <dbReference type="EC" id="4.1.2.61"/>
    </reaction>
    <physiologicalReaction direction="left-to-right" evidence="4">
        <dbReference type="Rhea" id="RHEA:14518"/>
    </physiologicalReaction>
</comment>
<comment type="catalytic activity">
    <reaction evidence="1 4">
        <text>3-hydroxy-3-(4-hydroxy-3-methoxyphenyl)propanoyl-CoA = vanillin + acetyl-CoA</text>
        <dbReference type="Rhea" id="RHEA:18725"/>
        <dbReference type="ChEBI" id="CHEBI:18346"/>
        <dbReference type="ChEBI" id="CHEBI:57288"/>
        <dbReference type="ChEBI" id="CHEBI:58004"/>
    </reaction>
    <physiologicalReaction direction="left-to-right" evidence="4">
        <dbReference type="Rhea" id="RHEA:18726"/>
    </physiologicalReaction>
</comment>
<comment type="catalytic activity">
    <reaction evidence="1">
        <text>(E)-caffeoyl-CoA + H2O = 3-hydroxy-3-(3,4-dihydroxyphenyl)propanoyl-CoA</text>
        <dbReference type="Rhea" id="RHEA:62424"/>
        <dbReference type="ChEBI" id="CHEBI:15377"/>
        <dbReference type="ChEBI" id="CHEBI:87136"/>
        <dbReference type="ChEBI" id="CHEBI:145752"/>
    </reaction>
</comment>
<comment type="catalytic activity">
    <reaction evidence="1">
        <text>3-hydroxy-3-(3,4-dihydroxyphenyl)propanoyl-CoA = 3,4-dihydroxybenzaldehyde + acetyl-CoA</text>
        <dbReference type="Rhea" id="RHEA:62428"/>
        <dbReference type="ChEBI" id="CHEBI:50205"/>
        <dbReference type="ChEBI" id="CHEBI:57288"/>
        <dbReference type="ChEBI" id="CHEBI:145752"/>
    </reaction>
</comment>
<comment type="catalytic activity">
    <reaction evidence="1">
        <text>(E)-4-coumaroyl-CoA + H2O = 3-hydroxy-3-(4-hydroxyphenyl)propanoyl-CoA</text>
        <dbReference type="Rhea" id="RHEA:40991"/>
        <dbReference type="ChEBI" id="CHEBI:15377"/>
        <dbReference type="ChEBI" id="CHEBI:73500"/>
        <dbReference type="ChEBI" id="CHEBI:85008"/>
    </reaction>
</comment>
<comment type="catalytic activity">
    <reaction evidence="1">
        <text>3-hydroxy-3-(4-hydroxyphenyl)propanoyl-CoA = 4-hydroxybenzaldehyde + acetyl-CoA</text>
        <dbReference type="Rhea" id="RHEA:40995"/>
        <dbReference type="ChEBI" id="CHEBI:17597"/>
        <dbReference type="ChEBI" id="CHEBI:57288"/>
        <dbReference type="ChEBI" id="CHEBI:73500"/>
    </reaction>
</comment>
<comment type="biophysicochemical properties">
    <kinetics>
        <KM evidence="3">11.8 uM for feruloyl-CoA</KM>
        <KM evidence="1">2.4 uM for feruloyl-CoA</KM>
        <KM evidence="1">5.3 uM for 4-coumaroyl-CoA</KM>
        <KM evidence="1">1.6 uM for caffeoyl-CoA</KM>
        <Vmax evidence="1">36.5 nmol/sec/mg enzyme with feruloyl-CoA as substrate</Vmax>
        <Vmax evidence="1">73.3 nmol/sec/mg enzyme with 4-coumaroyl-CoA as substrate</Vmax>
        <Vmax evidence="1">15.2 nmol/sec/mg enzyme with caffeoyl-CoA as substrate</Vmax>
        <text evidence="3">kcat is 3.72 sec(-1) with feruloyl-CoA as substrate.</text>
    </kinetics>
    <phDependence>
        <text evidence="1">Optimum pH is 8.5-9.5.</text>
    </phDependence>
</comment>
<comment type="subunit">
    <text evidence="2 3">Homohexamer; dimer of trimers.</text>
</comment>
<comment type="similarity">
    <text evidence="6">Belongs to the enoyl-CoA hydratase/isomerase family.</text>
</comment>
<keyword id="KW-0002">3D-structure</keyword>
<keyword id="KW-0903">Direct protein sequencing</keyword>
<keyword id="KW-0456">Lyase</keyword>
<accession>O69762</accession>
<sequence>MSTYEGRWKTVKVEIEDGIAFVILNRPEKRNAMSPTLNREMIDVLETLEQDPAAGVLVLTGAGEAWTAGMDLKEYFREVDAGPEILQEKIRREASQWQWKLLRMYAKPTIAMVNGWCFGGGFSPLVACDLAICADEATFGLSEINWGIPPGNLVSKAMADTVGHRQSLYYIMTGKTFGGQKAAEMGLVNESVPLAQLREVTIELARNLLEKNPVVLRAAKHGFKRCRELTWEQNEDYLYAKLDQSRLLDTEGGREQGMKQFLDDKSIKPGLQAYKR</sequence>